<organism>
    <name type="scientific">Escherichia coli (strain K12 / MC4100 / BW2952)</name>
    <dbReference type="NCBI Taxonomy" id="595496"/>
    <lineage>
        <taxon>Bacteria</taxon>
        <taxon>Pseudomonadati</taxon>
        <taxon>Pseudomonadota</taxon>
        <taxon>Gammaproteobacteria</taxon>
        <taxon>Enterobacterales</taxon>
        <taxon>Enterobacteriaceae</taxon>
        <taxon>Escherichia</taxon>
    </lineage>
</organism>
<gene>
    <name evidence="1" type="primary">rpsO</name>
    <name type="ordered locus">BWG_2869</name>
</gene>
<name>RS15_ECOBW</name>
<reference key="1">
    <citation type="journal article" date="2009" name="J. Bacteriol.">
        <title>Genomic sequencing reveals regulatory mutations and recombinational events in the widely used MC4100 lineage of Escherichia coli K-12.</title>
        <authorList>
            <person name="Ferenci T."/>
            <person name="Zhou Z."/>
            <person name="Betteridge T."/>
            <person name="Ren Y."/>
            <person name="Liu Y."/>
            <person name="Feng L."/>
            <person name="Reeves P.R."/>
            <person name="Wang L."/>
        </authorList>
    </citation>
    <scope>NUCLEOTIDE SEQUENCE [LARGE SCALE GENOMIC DNA]</scope>
    <source>
        <strain>K12 / MC4100 / BW2952</strain>
    </source>
</reference>
<feature type="chain" id="PRO_1000214755" description="Small ribosomal subunit protein uS15">
    <location>
        <begin position="1"/>
        <end position="89"/>
    </location>
</feature>
<protein>
    <recommendedName>
        <fullName evidence="1">Small ribosomal subunit protein uS15</fullName>
    </recommendedName>
    <alternativeName>
        <fullName evidence="2">30S ribosomal protein S15</fullName>
    </alternativeName>
</protein>
<sequence>MSLSTEATAKIVSEFGRDANDTGSTEVQVALLTAQINHLQGHFAEHKKDHHSRRGLLRMVSQRRKLLDYLKRKDVARYTQLIERLGLRR</sequence>
<accession>C4ZSQ6</accession>
<evidence type="ECO:0000255" key="1">
    <source>
        <dbReference type="HAMAP-Rule" id="MF_01343"/>
    </source>
</evidence>
<evidence type="ECO:0000305" key="2"/>
<keyword id="KW-0687">Ribonucleoprotein</keyword>
<keyword id="KW-0689">Ribosomal protein</keyword>
<keyword id="KW-0694">RNA-binding</keyword>
<keyword id="KW-0699">rRNA-binding</keyword>
<comment type="function">
    <text evidence="1">One of the primary rRNA binding proteins, it binds directly to 16S rRNA where it helps nucleate assembly of the platform of the 30S subunit by binding and bridging several RNA helices of the 16S rRNA.</text>
</comment>
<comment type="function">
    <text evidence="1">Forms an intersubunit bridge (bridge B4) with the 23S rRNA of the 50S subunit in the ribosome.</text>
</comment>
<comment type="subunit">
    <text evidence="1">Part of the 30S ribosomal subunit. Forms a bridge to the 50S subunit in the 70S ribosome, contacting the 23S rRNA.</text>
</comment>
<comment type="similarity">
    <text evidence="1">Belongs to the universal ribosomal protein uS15 family.</text>
</comment>
<dbReference type="EMBL" id="CP001396">
    <property type="protein sequence ID" value="ACR61787.1"/>
    <property type="molecule type" value="Genomic_DNA"/>
</dbReference>
<dbReference type="RefSeq" id="WP_000059466.1">
    <property type="nucleotide sequence ID" value="NC_012759.1"/>
</dbReference>
<dbReference type="SMR" id="C4ZSQ6"/>
<dbReference type="GeneID" id="93778818"/>
<dbReference type="KEGG" id="ebw:BWG_2869"/>
<dbReference type="HOGENOM" id="CLU_148518_0_0_6"/>
<dbReference type="GO" id="GO:0022627">
    <property type="term" value="C:cytosolic small ribosomal subunit"/>
    <property type="evidence" value="ECO:0007669"/>
    <property type="project" value="TreeGrafter"/>
</dbReference>
<dbReference type="GO" id="GO:0019843">
    <property type="term" value="F:rRNA binding"/>
    <property type="evidence" value="ECO:0007669"/>
    <property type="project" value="UniProtKB-UniRule"/>
</dbReference>
<dbReference type="GO" id="GO:0003735">
    <property type="term" value="F:structural constituent of ribosome"/>
    <property type="evidence" value="ECO:0007669"/>
    <property type="project" value="InterPro"/>
</dbReference>
<dbReference type="GO" id="GO:0006412">
    <property type="term" value="P:translation"/>
    <property type="evidence" value="ECO:0007669"/>
    <property type="project" value="UniProtKB-UniRule"/>
</dbReference>
<dbReference type="CDD" id="cd00353">
    <property type="entry name" value="Ribosomal_S15p_S13e"/>
    <property type="match status" value="1"/>
</dbReference>
<dbReference type="FunFam" id="1.10.287.10:FF:000002">
    <property type="entry name" value="30S ribosomal protein S15"/>
    <property type="match status" value="1"/>
</dbReference>
<dbReference type="Gene3D" id="6.10.250.3130">
    <property type="match status" value="1"/>
</dbReference>
<dbReference type="Gene3D" id="1.10.287.10">
    <property type="entry name" value="S15/NS1, RNA-binding"/>
    <property type="match status" value="1"/>
</dbReference>
<dbReference type="HAMAP" id="MF_01343_B">
    <property type="entry name" value="Ribosomal_uS15_B"/>
    <property type="match status" value="1"/>
</dbReference>
<dbReference type="InterPro" id="IPR000589">
    <property type="entry name" value="Ribosomal_uS15"/>
</dbReference>
<dbReference type="InterPro" id="IPR005290">
    <property type="entry name" value="Ribosomal_uS15_bac-type"/>
</dbReference>
<dbReference type="InterPro" id="IPR009068">
    <property type="entry name" value="uS15_NS1_RNA-bd_sf"/>
</dbReference>
<dbReference type="NCBIfam" id="TIGR00952">
    <property type="entry name" value="S15_bact"/>
    <property type="match status" value="1"/>
</dbReference>
<dbReference type="PANTHER" id="PTHR23321">
    <property type="entry name" value="RIBOSOMAL PROTEIN S15, BACTERIAL AND ORGANELLAR"/>
    <property type="match status" value="1"/>
</dbReference>
<dbReference type="PANTHER" id="PTHR23321:SF26">
    <property type="entry name" value="SMALL RIBOSOMAL SUBUNIT PROTEIN US15M"/>
    <property type="match status" value="1"/>
</dbReference>
<dbReference type="Pfam" id="PF00312">
    <property type="entry name" value="Ribosomal_S15"/>
    <property type="match status" value="1"/>
</dbReference>
<dbReference type="SMART" id="SM01387">
    <property type="entry name" value="Ribosomal_S15"/>
    <property type="match status" value="1"/>
</dbReference>
<dbReference type="SUPFAM" id="SSF47060">
    <property type="entry name" value="S15/NS1 RNA-binding domain"/>
    <property type="match status" value="1"/>
</dbReference>
<dbReference type="PROSITE" id="PS00362">
    <property type="entry name" value="RIBOSOMAL_S15"/>
    <property type="match status" value="1"/>
</dbReference>
<proteinExistence type="inferred from homology"/>